<proteinExistence type="inferred from homology"/>
<organism>
    <name type="scientific">Rhizobium rhizogenes (strain K84 / ATCC BAA-868)</name>
    <name type="common">Agrobacterium radiobacter</name>
    <dbReference type="NCBI Taxonomy" id="311403"/>
    <lineage>
        <taxon>Bacteria</taxon>
        <taxon>Pseudomonadati</taxon>
        <taxon>Pseudomonadota</taxon>
        <taxon>Alphaproteobacteria</taxon>
        <taxon>Hyphomicrobiales</taxon>
        <taxon>Rhizobiaceae</taxon>
        <taxon>Rhizobium/Agrobacterium group</taxon>
        <taxon>Rhizobium</taxon>
    </lineage>
</organism>
<dbReference type="EC" id="3.5.1.5" evidence="1"/>
<dbReference type="EMBL" id="CP000628">
    <property type="protein sequence ID" value="ACM27414.1"/>
    <property type="molecule type" value="Genomic_DNA"/>
</dbReference>
<dbReference type="RefSeq" id="WP_007689920.1">
    <property type="nucleotide sequence ID" value="NC_011985.1"/>
</dbReference>
<dbReference type="SMR" id="B9J8M6"/>
<dbReference type="STRING" id="311403.Arad_3472"/>
<dbReference type="KEGG" id="ara:Arad_3472"/>
<dbReference type="eggNOG" id="COG0831">
    <property type="taxonomic scope" value="Bacteria"/>
</dbReference>
<dbReference type="HOGENOM" id="CLU_145825_1_0_5"/>
<dbReference type="UniPathway" id="UPA00258">
    <property type="reaction ID" value="UER00370"/>
</dbReference>
<dbReference type="Proteomes" id="UP000001600">
    <property type="component" value="Chromosome 1"/>
</dbReference>
<dbReference type="GO" id="GO:0005737">
    <property type="term" value="C:cytoplasm"/>
    <property type="evidence" value="ECO:0007669"/>
    <property type="project" value="UniProtKB-SubCell"/>
</dbReference>
<dbReference type="GO" id="GO:0016151">
    <property type="term" value="F:nickel cation binding"/>
    <property type="evidence" value="ECO:0007669"/>
    <property type="project" value="InterPro"/>
</dbReference>
<dbReference type="GO" id="GO:0009039">
    <property type="term" value="F:urease activity"/>
    <property type="evidence" value="ECO:0007669"/>
    <property type="project" value="UniProtKB-UniRule"/>
</dbReference>
<dbReference type="GO" id="GO:0043419">
    <property type="term" value="P:urea catabolic process"/>
    <property type="evidence" value="ECO:0007669"/>
    <property type="project" value="UniProtKB-UniRule"/>
</dbReference>
<dbReference type="CDD" id="cd00390">
    <property type="entry name" value="Urease_gamma"/>
    <property type="match status" value="1"/>
</dbReference>
<dbReference type="Gene3D" id="3.30.280.10">
    <property type="entry name" value="Urease, gamma-like subunit"/>
    <property type="match status" value="1"/>
</dbReference>
<dbReference type="HAMAP" id="MF_00739">
    <property type="entry name" value="Urease_gamma"/>
    <property type="match status" value="1"/>
</dbReference>
<dbReference type="InterPro" id="IPR012010">
    <property type="entry name" value="Urease_gamma"/>
</dbReference>
<dbReference type="InterPro" id="IPR002026">
    <property type="entry name" value="Urease_gamma/gamma-beta_su"/>
</dbReference>
<dbReference type="InterPro" id="IPR036463">
    <property type="entry name" value="Urease_gamma_sf"/>
</dbReference>
<dbReference type="InterPro" id="IPR050069">
    <property type="entry name" value="Urease_subunit"/>
</dbReference>
<dbReference type="NCBIfam" id="NF009712">
    <property type="entry name" value="PRK13241.1"/>
    <property type="match status" value="1"/>
</dbReference>
<dbReference type="NCBIfam" id="TIGR00193">
    <property type="entry name" value="urease_gam"/>
    <property type="match status" value="1"/>
</dbReference>
<dbReference type="PANTHER" id="PTHR33569">
    <property type="entry name" value="UREASE"/>
    <property type="match status" value="1"/>
</dbReference>
<dbReference type="PANTHER" id="PTHR33569:SF1">
    <property type="entry name" value="UREASE"/>
    <property type="match status" value="1"/>
</dbReference>
<dbReference type="Pfam" id="PF00547">
    <property type="entry name" value="Urease_gamma"/>
    <property type="match status" value="1"/>
</dbReference>
<dbReference type="PIRSF" id="PIRSF001223">
    <property type="entry name" value="Urease_gamma"/>
    <property type="match status" value="1"/>
</dbReference>
<dbReference type="SUPFAM" id="SSF54111">
    <property type="entry name" value="Urease, gamma-subunit"/>
    <property type="match status" value="1"/>
</dbReference>
<sequence>MNLTPREKDKLLISMAAMVARRRLERGVKLNYPEAIALISDFVVEGARDGRPVAELMEAGAHVITRDQVMEGIAEMIHDVQVEATFPDGTKLVTVHEPIR</sequence>
<reference key="1">
    <citation type="journal article" date="2009" name="J. Bacteriol.">
        <title>Genome sequences of three Agrobacterium biovars help elucidate the evolution of multichromosome genomes in bacteria.</title>
        <authorList>
            <person name="Slater S.C."/>
            <person name="Goldman B.S."/>
            <person name="Goodner B."/>
            <person name="Setubal J.C."/>
            <person name="Farrand S.K."/>
            <person name="Nester E.W."/>
            <person name="Burr T.J."/>
            <person name="Banta L."/>
            <person name="Dickerman A.W."/>
            <person name="Paulsen I."/>
            <person name="Otten L."/>
            <person name="Suen G."/>
            <person name="Welch R."/>
            <person name="Almeida N.F."/>
            <person name="Arnold F."/>
            <person name="Burton O.T."/>
            <person name="Du Z."/>
            <person name="Ewing A."/>
            <person name="Godsy E."/>
            <person name="Heisel S."/>
            <person name="Houmiel K.L."/>
            <person name="Jhaveri J."/>
            <person name="Lu J."/>
            <person name="Miller N.M."/>
            <person name="Norton S."/>
            <person name="Chen Q."/>
            <person name="Phoolcharoen W."/>
            <person name="Ohlin V."/>
            <person name="Ondrusek D."/>
            <person name="Pride N."/>
            <person name="Stricklin S.L."/>
            <person name="Sun J."/>
            <person name="Wheeler C."/>
            <person name="Wilson L."/>
            <person name="Zhu H."/>
            <person name="Wood D.W."/>
        </authorList>
    </citation>
    <scope>NUCLEOTIDE SEQUENCE [LARGE SCALE GENOMIC DNA]</scope>
    <source>
        <strain>K84 / ATCC BAA-868</strain>
    </source>
</reference>
<evidence type="ECO:0000255" key="1">
    <source>
        <dbReference type="HAMAP-Rule" id="MF_00739"/>
    </source>
</evidence>
<protein>
    <recommendedName>
        <fullName evidence="1">Urease subunit gamma</fullName>
        <ecNumber evidence="1">3.5.1.5</ecNumber>
    </recommendedName>
    <alternativeName>
        <fullName evidence="1">Urea amidohydrolase subunit gamma</fullName>
    </alternativeName>
</protein>
<feature type="chain" id="PRO_1000199848" description="Urease subunit gamma">
    <location>
        <begin position="1"/>
        <end position="100"/>
    </location>
</feature>
<gene>
    <name evidence="1" type="primary">ureA</name>
    <name type="ordered locus">Arad_3472</name>
</gene>
<accession>B9J8M6</accession>
<keyword id="KW-0963">Cytoplasm</keyword>
<keyword id="KW-0378">Hydrolase</keyword>
<name>URE3_RHIR8</name>
<comment type="catalytic activity">
    <reaction evidence="1">
        <text>urea + 2 H2O + H(+) = hydrogencarbonate + 2 NH4(+)</text>
        <dbReference type="Rhea" id="RHEA:20557"/>
        <dbReference type="ChEBI" id="CHEBI:15377"/>
        <dbReference type="ChEBI" id="CHEBI:15378"/>
        <dbReference type="ChEBI" id="CHEBI:16199"/>
        <dbReference type="ChEBI" id="CHEBI:17544"/>
        <dbReference type="ChEBI" id="CHEBI:28938"/>
        <dbReference type="EC" id="3.5.1.5"/>
    </reaction>
</comment>
<comment type="pathway">
    <text evidence="1">Nitrogen metabolism; urea degradation; CO(2) and NH(3) from urea (urease route): step 1/1.</text>
</comment>
<comment type="subunit">
    <text evidence="1">Heterotrimer of UreA (gamma), UreB (beta) and UreC (alpha) subunits. Three heterotrimers associate to form the active enzyme.</text>
</comment>
<comment type="subcellular location">
    <subcellularLocation>
        <location evidence="1">Cytoplasm</location>
    </subcellularLocation>
</comment>
<comment type="similarity">
    <text evidence="1">Belongs to the urease gamma subunit family.</text>
</comment>